<reference key="1">
    <citation type="journal article" date="2002" name="Nature">
        <title>The genome sequence of Schizosaccharomyces pombe.</title>
        <authorList>
            <person name="Wood V."/>
            <person name="Gwilliam R."/>
            <person name="Rajandream M.A."/>
            <person name="Lyne M.H."/>
            <person name="Lyne R."/>
            <person name="Stewart A."/>
            <person name="Sgouros J.G."/>
            <person name="Peat N."/>
            <person name="Hayles J."/>
            <person name="Baker S.G."/>
            <person name="Basham D."/>
            <person name="Bowman S."/>
            <person name="Brooks K."/>
            <person name="Brown D."/>
            <person name="Brown S."/>
            <person name="Chillingworth T."/>
            <person name="Churcher C.M."/>
            <person name="Collins M."/>
            <person name="Connor R."/>
            <person name="Cronin A."/>
            <person name="Davis P."/>
            <person name="Feltwell T."/>
            <person name="Fraser A."/>
            <person name="Gentles S."/>
            <person name="Goble A."/>
            <person name="Hamlin N."/>
            <person name="Harris D.E."/>
            <person name="Hidalgo J."/>
            <person name="Hodgson G."/>
            <person name="Holroyd S."/>
            <person name="Hornsby T."/>
            <person name="Howarth S."/>
            <person name="Huckle E.J."/>
            <person name="Hunt S."/>
            <person name="Jagels K."/>
            <person name="James K.D."/>
            <person name="Jones L."/>
            <person name="Jones M."/>
            <person name="Leather S."/>
            <person name="McDonald S."/>
            <person name="McLean J."/>
            <person name="Mooney P."/>
            <person name="Moule S."/>
            <person name="Mungall K.L."/>
            <person name="Murphy L.D."/>
            <person name="Niblett D."/>
            <person name="Odell C."/>
            <person name="Oliver K."/>
            <person name="O'Neil S."/>
            <person name="Pearson D."/>
            <person name="Quail M.A."/>
            <person name="Rabbinowitsch E."/>
            <person name="Rutherford K.M."/>
            <person name="Rutter S."/>
            <person name="Saunders D."/>
            <person name="Seeger K."/>
            <person name="Sharp S."/>
            <person name="Skelton J."/>
            <person name="Simmonds M.N."/>
            <person name="Squares R."/>
            <person name="Squares S."/>
            <person name="Stevens K."/>
            <person name="Taylor K."/>
            <person name="Taylor R.G."/>
            <person name="Tivey A."/>
            <person name="Walsh S.V."/>
            <person name="Warren T."/>
            <person name="Whitehead S."/>
            <person name="Woodward J.R."/>
            <person name="Volckaert G."/>
            <person name="Aert R."/>
            <person name="Robben J."/>
            <person name="Grymonprez B."/>
            <person name="Weltjens I."/>
            <person name="Vanstreels E."/>
            <person name="Rieger M."/>
            <person name="Schaefer M."/>
            <person name="Mueller-Auer S."/>
            <person name="Gabel C."/>
            <person name="Fuchs M."/>
            <person name="Duesterhoeft A."/>
            <person name="Fritzc C."/>
            <person name="Holzer E."/>
            <person name="Moestl D."/>
            <person name="Hilbert H."/>
            <person name="Borzym K."/>
            <person name="Langer I."/>
            <person name="Beck A."/>
            <person name="Lehrach H."/>
            <person name="Reinhardt R."/>
            <person name="Pohl T.M."/>
            <person name="Eger P."/>
            <person name="Zimmermann W."/>
            <person name="Wedler H."/>
            <person name="Wambutt R."/>
            <person name="Purnelle B."/>
            <person name="Goffeau A."/>
            <person name="Cadieu E."/>
            <person name="Dreano S."/>
            <person name="Gloux S."/>
            <person name="Lelaure V."/>
            <person name="Mottier S."/>
            <person name="Galibert F."/>
            <person name="Aves S.J."/>
            <person name="Xiang Z."/>
            <person name="Hunt C."/>
            <person name="Moore K."/>
            <person name="Hurst S.M."/>
            <person name="Lucas M."/>
            <person name="Rochet M."/>
            <person name="Gaillardin C."/>
            <person name="Tallada V.A."/>
            <person name="Garzon A."/>
            <person name="Thode G."/>
            <person name="Daga R.R."/>
            <person name="Cruzado L."/>
            <person name="Jimenez J."/>
            <person name="Sanchez M."/>
            <person name="del Rey F."/>
            <person name="Benito J."/>
            <person name="Dominguez A."/>
            <person name="Revuelta J.L."/>
            <person name="Moreno S."/>
            <person name="Armstrong J."/>
            <person name="Forsburg S.L."/>
            <person name="Cerutti L."/>
            <person name="Lowe T."/>
            <person name="McCombie W.R."/>
            <person name="Paulsen I."/>
            <person name="Potashkin J."/>
            <person name="Shpakovski G.V."/>
            <person name="Ussery D."/>
            <person name="Barrell B.G."/>
            <person name="Nurse P."/>
        </authorList>
    </citation>
    <scope>NUCLEOTIDE SEQUENCE [LARGE SCALE GENOMIC DNA]</scope>
    <source>
        <strain>972 / ATCC 24843</strain>
    </source>
</reference>
<reference key="2">
    <citation type="journal article" date="2006" name="Nat. Biotechnol.">
        <title>ORFeome cloning and global analysis of protein localization in the fission yeast Schizosaccharomyces pombe.</title>
        <authorList>
            <person name="Matsuyama A."/>
            <person name="Arai R."/>
            <person name="Yashiroda Y."/>
            <person name="Shirai A."/>
            <person name="Kamata A."/>
            <person name="Sekido S."/>
            <person name="Kobayashi Y."/>
            <person name="Hashimoto A."/>
            <person name="Hamamoto M."/>
            <person name="Hiraoka Y."/>
            <person name="Horinouchi S."/>
            <person name="Yoshida M."/>
        </authorList>
    </citation>
    <scope>SUBCELLULAR LOCATION [LARGE SCALE ANALYSIS]</scope>
</reference>
<name>FMT_SCHPO</name>
<keyword id="KW-0963">Cytoplasm</keyword>
<keyword id="KW-0496">Mitochondrion</keyword>
<keyword id="KW-0648">Protein biosynthesis</keyword>
<keyword id="KW-1185">Reference proteome</keyword>
<keyword id="KW-0808">Transferase</keyword>
<comment type="function">
    <text evidence="1">Formylates methionyl-tRNA in mitochondria and the cytoplasm. Responsible for the formylation of the N-terminally formylated (Nt-formylated) mitochondrial matrix proteins that are encoded by mitochondrial DNA. Nt-formylated proteins in the cytoplasm are strongly up-regulated in stationary phase or upon starvation for specific amino acids and are targeted for degradation by an E3 ubiquitin ligase-mediated fMet/N-end rule pathway. Increased Nt-formylation of cytosolic proteins appears to be important for adaptation to these stresses.</text>
</comment>
<comment type="catalytic activity">
    <reaction evidence="1">
        <text>L-methionyl-tRNA(fMet) + (6R)-10-formyltetrahydrofolate = N-formyl-L-methionyl-tRNA(fMet) + (6S)-5,6,7,8-tetrahydrofolate + H(+)</text>
        <dbReference type="Rhea" id="RHEA:24380"/>
        <dbReference type="Rhea" id="RHEA-COMP:9952"/>
        <dbReference type="Rhea" id="RHEA-COMP:9953"/>
        <dbReference type="ChEBI" id="CHEBI:15378"/>
        <dbReference type="ChEBI" id="CHEBI:57453"/>
        <dbReference type="ChEBI" id="CHEBI:78530"/>
        <dbReference type="ChEBI" id="CHEBI:78844"/>
        <dbReference type="ChEBI" id="CHEBI:195366"/>
        <dbReference type="EC" id="2.1.2.9"/>
    </reaction>
</comment>
<comment type="subcellular location">
    <subcellularLocation>
        <location evidence="1">Mitochondrion</location>
    </subcellularLocation>
    <subcellularLocation>
        <location evidence="1">Mitochondrion matrix</location>
    </subcellularLocation>
    <subcellularLocation>
        <location evidence="2">Cytoplasm</location>
    </subcellularLocation>
</comment>
<comment type="similarity">
    <text evidence="3">Belongs to the Fmt family.</text>
</comment>
<evidence type="ECO:0000250" key="1">
    <source>
        <dbReference type="UniProtKB" id="P32785"/>
    </source>
</evidence>
<evidence type="ECO:0000269" key="2">
    <source>
    </source>
</evidence>
<evidence type="ECO:0000305" key="3"/>
<gene>
    <name type="primary">fmt1</name>
    <name type="ORF">SPAC1805.09c</name>
</gene>
<organism>
    <name type="scientific">Schizosaccharomyces pombe (strain 972 / ATCC 24843)</name>
    <name type="common">Fission yeast</name>
    <dbReference type="NCBI Taxonomy" id="284812"/>
    <lineage>
        <taxon>Eukaryota</taxon>
        <taxon>Fungi</taxon>
        <taxon>Dikarya</taxon>
        <taxon>Ascomycota</taxon>
        <taxon>Taphrinomycotina</taxon>
        <taxon>Schizosaccharomycetes</taxon>
        <taxon>Schizosaccharomycetales</taxon>
        <taxon>Schizosaccharomycetaceae</taxon>
        <taxon>Schizosaccharomyces</taxon>
    </lineage>
</organism>
<dbReference type="EC" id="2.1.2.9"/>
<dbReference type="EMBL" id="CU329670">
    <property type="protein sequence ID" value="CAB55850.1"/>
    <property type="molecule type" value="Genomic_DNA"/>
</dbReference>
<dbReference type="PIR" id="T37894">
    <property type="entry name" value="T37894"/>
</dbReference>
<dbReference type="RefSeq" id="NP_593920.1">
    <property type="nucleotide sequence ID" value="NM_001019349.2"/>
</dbReference>
<dbReference type="SMR" id="Q9UTG6"/>
<dbReference type="BioGRID" id="278762">
    <property type="interactions" value="10"/>
</dbReference>
<dbReference type="FunCoup" id="Q9UTG6">
    <property type="interactions" value="287"/>
</dbReference>
<dbReference type="STRING" id="284812.Q9UTG6"/>
<dbReference type="PaxDb" id="4896-SPAC1805.09c.1"/>
<dbReference type="EnsemblFungi" id="SPAC1805.09c.1">
    <property type="protein sequence ID" value="SPAC1805.09c.1:pep"/>
    <property type="gene ID" value="SPAC1805.09c"/>
</dbReference>
<dbReference type="GeneID" id="2542294"/>
<dbReference type="KEGG" id="spo:2542294"/>
<dbReference type="PomBase" id="SPAC1805.09c">
    <property type="gene designation" value="fmt1"/>
</dbReference>
<dbReference type="VEuPathDB" id="FungiDB:SPAC1805.09c"/>
<dbReference type="eggNOG" id="KOG3082">
    <property type="taxonomic scope" value="Eukaryota"/>
</dbReference>
<dbReference type="HOGENOM" id="CLU_033347_0_0_1"/>
<dbReference type="InParanoid" id="Q9UTG6"/>
<dbReference type="OMA" id="YGGINIH"/>
<dbReference type="PhylomeDB" id="Q9UTG6"/>
<dbReference type="PRO" id="PR:Q9UTG6"/>
<dbReference type="Proteomes" id="UP000002485">
    <property type="component" value="Chromosome I"/>
</dbReference>
<dbReference type="GO" id="GO:0005737">
    <property type="term" value="C:cytoplasm"/>
    <property type="evidence" value="ECO:0007005"/>
    <property type="project" value="PomBase"/>
</dbReference>
<dbReference type="GO" id="GO:0005759">
    <property type="term" value="C:mitochondrial matrix"/>
    <property type="evidence" value="ECO:0000305"/>
    <property type="project" value="PomBase"/>
</dbReference>
<dbReference type="GO" id="GO:0005739">
    <property type="term" value="C:mitochondrion"/>
    <property type="evidence" value="ECO:0000318"/>
    <property type="project" value="GO_Central"/>
</dbReference>
<dbReference type="GO" id="GO:0004479">
    <property type="term" value="F:methionyl-tRNA formyltransferase activity"/>
    <property type="evidence" value="ECO:0000318"/>
    <property type="project" value="GO_Central"/>
</dbReference>
<dbReference type="GO" id="GO:0071951">
    <property type="term" value="P:conversion of methionyl-tRNA to N-formyl-methionyl-tRNA"/>
    <property type="evidence" value="ECO:0000318"/>
    <property type="project" value="GO_Central"/>
</dbReference>
<dbReference type="GO" id="GO:0070124">
    <property type="term" value="P:mitochondrial translational initiation"/>
    <property type="evidence" value="ECO:0000266"/>
    <property type="project" value="PomBase"/>
</dbReference>
<dbReference type="CDD" id="cd08646">
    <property type="entry name" value="FMT_core_Met-tRNA-FMT_N"/>
    <property type="match status" value="1"/>
</dbReference>
<dbReference type="Gene3D" id="3.40.50.12230">
    <property type="match status" value="1"/>
</dbReference>
<dbReference type="InterPro" id="IPR005793">
    <property type="entry name" value="Formyl_trans_C"/>
</dbReference>
<dbReference type="InterPro" id="IPR002376">
    <property type="entry name" value="Formyl_transf_N"/>
</dbReference>
<dbReference type="InterPro" id="IPR036477">
    <property type="entry name" value="Formyl_transf_N_sf"/>
</dbReference>
<dbReference type="InterPro" id="IPR011034">
    <property type="entry name" value="Formyl_transferase-like_C_sf"/>
</dbReference>
<dbReference type="InterPro" id="IPR041711">
    <property type="entry name" value="Met-tRNA-FMT_N"/>
</dbReference>
<dbReference type="PANTHER" id="PTHR11138">
    <property type="entry name" value="METHIONYL-TRNA FORMYLTRANSFERASE"/>
    <property type="match status" value="1"/>
</dbReference>
<dbReference type="PANTHER" id="PTHR11138:SF5">
    <property type="entry name" value="METHIONYL-TRNA FORMYLTRANSFERASE, MITOCHONDRIAL"/>
    <property type="match status" value="1"/>
</dbReference>
<dbReference type="Pfam" id="PF02911">
    <property type="entry name" value="Formyl_trans_C"/>
    <property type="match status" value="1"/>
</dbReference>
<dbReference type="Pfam" id="PF00551">
    <property type="entry name" value="Formyl_trans_N"/>
    <property type="match status" value="1"/>
</dbReference>
<dbReference type="SUPFAM" id="SSF50486">
    <property type="entry name" value="FMT C-terminal domain-like"/>
    <property type="match status" value="1"/>
</dbReference>
<dbReference type="SUPFAM" id="SSF53328">
    <property type="entry name" value="Formyltransferase"/>
    <property type="match status" value="1"/>
</dbReference>
<feature type="chain" id="PRO_0000083096" description="Putative methionyl-tRNA formyltransferase">
    <location>
        <begin position="1"/>
        <end position="340"/>
    </location>
</feature>
<proteinExistence type="inferred from homology"/>
<protein>
    <recommendedName>
        <fullName>Putative methionyl-tRNA formyltransferase</fullName>
        <ecNumber>2.1.2.9</ecNumber>
    </recommendedName>
</protein>
<sequence>MAPKIPLNVIFLGTDEFSIPILRKLIGCVQRVRVVSAGGKRQSRRGEIPLPPAAMEANANGLEYIKLQDGWKNFHMRPDDQLAITASFGRFVPFKILNQLPYGGINIHPSLLPKYRGAGPVYSTILNGDRLAGVTIQTMDSKQFDKGKSLAQAYLKLNGKETYTLLTKILSLGAAGMLEHVLLQSLYLPNCQTNTVAPQIHGRITDTGGLQLISKETFPSFQESWAKKITPEDAHVNFESMNTQQIYNMSRAFNHVWCILNNKKVFLYDVHPLHSTSAEDWIHMKPGEFALLEKNLLLVKTLDHVMVIKGGIRLSARKIVDPVEWGKTFNSGRGGRFQYV</sequence>
<accession>Q9UTG6</accession>